<dbReference type="EC" id="4.3.2.1" evidence="1"/>
<dbReference type="EMBL" id="CP001358">
    <property type="protein sequence ID" value="ACL49000.1"/>
    <property type="molecule type" value="Genomic_DNA"/>
</dbReference>
<dbReference type="SMR" id="B8IZS3"/>
<dbReference type="STRING" id="525146.Ddes_1094"/>
<dbReference type="KEGG" id="dds:Ddes_1094"/>
<dbReference type="eggNOG" id="COG0165">
    <property type="taxonomic scope" value="Bacteria"/>
</dbReference>
<dbReference type="HOGENOM" id="CLU_027272_2_3_7"/>
<dbReference type="UniPathway" id="UPA00068">
    <property type="reaction ID" value="UER00114"/>
</dbReference>
<dbReference type="GO" id="GO:0005829">
    <property type="term" value="C:cytosol"/>
    <property type="evidence" value="ECO:0007669"/>
    <property type="project" value="TreeGrafter"/>
</dbReference>
<dbReference type="GO" id="GO:0004056">
    <property type="term" value="F:argininosuccinate lyase activity"/>
    <property type="evidence" value="ECO:0007669"/>
    <property type="project" value="UniProtKB-UniRule"/>
</dbReference>
<dbReference type="GO" id="GO:0042450">
    <property type="term" value="P:arginine biosynthetic process via ornithine"/>
    <property type="evidence" value="ECO:0007669"/>
    <property type="project" value="InterPro"/>
</dbReference>
<dbReference type="GO" id="GO:0006526">
    <property type="term" value="P:L-arginine biosynthetic process"/>
    <property type="evidence" value="ECO:0007669"/>
    <property type="project" value="UniProtKB-UniRule"/>
</dbReference>
<dbReference type="CDD" id="cd01359">
    <property type="entry name" value="Argininosuccinate_lyase"/>
    <property type="match status" value="1"/>
</dbReference>
<dbReference type="FunFam" id="1.10.275.10:FF:000002">
    <property type="entry name" value="Argininosuccinate lyase"/>
    <property type="match status" value="1"/>
</dbReference>
<dbReference type="FunFam" id="1.10.40.30:FF:000001">
    <property type="entry name" value="Argininosuccinate lyase"/>
    <property type="match status" value="1"/>
</dbReference>
<dbReference type="FunFam" id="1.20.200.10:FF:000015">
    <property type="entry name" value="argininosuccinate lyase isoform X2"/>
    <property type="match status" value="1"/>
</dbReference>
<dbReference type="Gene3D" id="1.10.40.30">
    <property type="entry name" value="Fumarase/aspartase (C-terminal domain)"/>
    <property type="match status" value="1"/>
</dbReference>
<dbReference type="Gene3D" id="1.20.200.10">
    <property type="entry name" value="Fumarase/aspartase (Central domain)"/>
    <property type="match status" value="1"/>
</dbReference>
<dbReference type="Gene3D" id="1.10.275.10">
    <property type="entry name" value="Fumarase/aspartase (N-terminal domain)"/>
    <property type="match status" value="1"/>
</dbReference>
<dbReference type="HAMAP" id="MF_00006">
    <property type="entry name" value="Arg_succ_lyase"/>
    <property type="match status" value="1"/>
</dbReference>
<dbReference type="InterPro" id="IPR029419">
    <property type="entry name" value="Arg_succ_lyase_C"/>
</dbReference>
<dbReference type="InterPro" id="IPR009049">
    <property type="entry name" value="Argininosuccinate_lyase"/>
</dbReference>
<dbReference type="InterPro" id="IPR024083">
    <property type="entry name" value="Fumarase/histidase_N"/>
</dbReference>
<dbReference type="InterPro" id="IPR020557">
    <property type="entry name" value="Fumarate_lyase_CS"/>
</dbReference>
<dbReference type="InterPro" id="IPR000362">
    <property type="entry name" value="Fumarate_lyase_fam"/>
</dbReference>
<dbReference type="InterPro" id="IPR022761">
    <property type="entry name" value="Fumarate_lyase_N"/>
</dbReference>
<dbReference type="InterPro" id="IPR008948">
    <property type="entry name" value="L-Aspartase-like"/>
</dbReference>
<dbReference type="NCBIfam" id="TIGR00838">
    <property type="entry name" value="argH"/>
    <property type="match status" value="1"/>
</dbReference>
<dbReference type="PANTHER" id="PTHR43814">
    <property type="entry name" value="ARGININOSUCCINATE LYASE"/>
    <property type="match status" value="1"/>
</dbReference>
<dbReference type="PANTHER" id="PTHR43814:SF1">
    <property type="entry name" value="ARGININOSUCCINATE LYASE"/>
    <property type="match status" value="1"/>
</dbReference>
<dbReference type="Pfam" id="PF14698">
    <property type="entry name" value="ASL_C2"/>
    <property type="match status" value="1"/>
</dbReference>
<dbReference type="Pfam" id="PF00206">
    <property type="entry name" value="Lyase_1"/>
    <property type="match status" value="1"/>
</dbReference>
<dbReference type="PRINTS" id="PR00145">
    <property type="entry name" value="ARGSUCLYASE"/>
</dbReference>
<dbReference type="PRINTS" id="PR00149">
    <property type="entry name" value="FUMRATELYASE"/>
</dbReference>
<dbReference type="SUPFAM" id="SSF48557">
    <property type="entry name" value="L-aspartase-like"/>
    <property type="match status" value="1"/>
</dbReference>
<dbReference type="PROSITE" id="PS00163">
    <property type="entry name" value="FUMARATE_LYASES"/>
    <property type="match status" value="1"/>
</dbReference>
<evidence type="ECO:0000255" key="1">
    <source>
        <dbReference type="HAMAP-Rule" id="MF_00006"/>
    </source>
</evidence>
<name>ARLY_DESDA</name>
<feature type="chain" id="PRO_1000116318" description="Argininosuccinate lyase">
    <location>
        <begin position="1"/>
        <end position="466"/>
    </location>
</feature>
<organism>
    <name type="scientific">Desulfovibrio desulfuricans (strain ATCC 27774 / DSM 6949 / MB)</name>
    <dbReference type="NCBI Taxonomy" id="525146"/>
    <lineage>
        <taxon>Bacteria</taxon>
        <taxon>Pseudomonadati</taxon>
        <taxon>Thermodesulfobacteriota</taxon>
        <taxon>Desulfovibrionia</taxon>
        <taxon>Desulfovibrionales</taxon>
        <taxon>Desulfovibrionaceae</taxon>
        <taxon>Desulfovibrio</taxon>
    </lineage>
</organism>
<gene>
    <name evidence="1" type="primary">argH</name>
    <name type="ordered locus">Ddes_1094</name>
</gene>
<comment type="catalytic activity">
    <reaction evidence="1">
        <text>2-(N(omega)-L-arginino)succinate = fumarate + L-arginine</text>
        <dbReference type="Rhea" id="RHEA:24020"/>
        <dbReference type="ChEBI" id="CHEBI:29806"/>
        <dbReference type="ChEBI" id="CHEBI:32682"/>
        <dbReference type="ChEBI" id="CHEBI:57472"/>
        <dbReference type="EC" id="4.3.2.1"/>
    </reaction>
</comment>
<comment type="pathway">
    <text evidence="1">Amino-acid biosynthesis; L-arginine biosynthesis; L-arginine from L-ornithine and carbamoyl phosphate: step 3/3.</text>
</comment>
<comment type="subcellular location">
    <subcellularLocation>
        <location evidence="1">Cytoplasm</location>
    </subcellularLocation>
</comment>
<comment type="similarity">
    <text evidence="1">Belongs to the lyase 1 family. Argininosuccinate lyase subfamily.</text>
</comment>
<reference key="1">
    <citation type="submission" date="2009-01" db="EMBL/GenBank/DDBJ databases">
        <title>Complete sequence of Desulfovibrio desulfuricans subsp. desulfuricans str. ATCC 27774.</title>
        <authorList>
            <consortium name="US DOE Joint Genome Institute"/>
            <person name="Lucas S."/>
            <person name="Copeland A."/>
            <person name="Lapidus A."/>
            <person name="Glavina del Rio T."/>
            <person name="Tice H."/>
            <person name="Bruce D."/>
            <person name="Goodwin L."/>
            <person name="Pitluck S."/>
            <person name="Sims D."/>
            <person name="Lu M."/>
            <person name="Kiss H."/>
            <person name="Meineke L."/>
            <person name="Brettin T."/>
            <person name="Detter J.C."/>
            <person name="Han C."/>
            <person name="Larimer F."/>
            <person name="Land M."/>
            <person name="Hauser L."/>
            <person name="Kyrpides N."/>
            <person name="Ovchinnikova G."/>
            <person name="Hazen T.C."/>
        </authorList>
    </citation>
    <scope>NUCLEOTIDE SEQUENCE [LARGE SCALE GENOMIC DNA]</scope>
    <source>
        <strain>ATCC 27774 / DSM 6949 / MB</strain>
    </source>
</reference>
<accession>B8IZS3</accession>
<keyword id="KW-0028">Amino-acid biosynthesis</keyword>
<keyword id="KW-0055">Arginine biosynthesis</keyword>
<keyword id="KW-0963">Cytoplasm</keyword>
<keyword id="KW-0456">Lyase</keyword>
<protein>
    <recommendedName>
        <fullName evidence="1">Argininosuccinate lyase</fullName>
        <shortName evidence="1">ASAL</shortName>
        <ecNumber evidence="1">4.3.2.1</ecNumber>
    </recommendedName>
    <alternativeName>
        <fullName evidence="1">Arginosuccinase</fullName>
    </alternativeName>
</protein>
<sequence>MKTNQSWGGRFAEGPKEAVAQYTDSQSYDRALYAQDIRASQAHARMLGRQGVITPEEAQLLVEGLDRVREEIRSDSFIWKPELEDVHMNIEARLTEIMGNVGKKLHTGRSRNDQVGLSFRLFVADRLETWRQRAAALCAILVQRATEHAGDILPGCTHLQPAQPVSLAHHLLAYAWMFRRDAMRLGDCLDRVRISPLGAAALAGTTYPLDPQSVAKDVGFDGIYGNSMDAVSDRDFVLEALFGGSTIMMHLSRLCEEIILWANPAFGFVRLPDSYSTGSSIMPQKKNPDVAELMRGKTGRVYGSLMGMLTIMKGLPLAYNRDMQEDKEGFLDADRTVEASLRLMAGMMEEIAFRTDRMREACKAGFLNATELADYLVGKGLPFREAHHVTGQCVAAAEKQAKGLEDLTLPEMQALEPRIGEDVYAILDYAAAVQRRETPGGTGPQSVAAQVAQLRTWLAGMDGMVQ</sequence>
<proteinExistence type="inferred from homology"/>